<comment type="function">
    <text evidence="1">Site-specific tyrosine recombinase, which acts by catalyzing the cutting and rejoining of the recombining DNA molecules. The XerC-XerD complex is essential to convert dimers of the bacterial chromosome into monomers to permit their segregation at cell division. It also contributes to the segregational stability of plasmids.</text>
</comment>
<comment type="subunit">
    <text evidence="1">Forms a cyclic heterotetrameric complex composed of two molecules of XerC and two molecules of XerD.</text>
</comment>
<comment type="subcellular location">
    <subcellularLocation>
        <location evidence="1">Cytoplasm</location>
    </subcellularLocation>
</comment>
<comment type="similarity">
    <text evidence="1">Belongs to the 'phage' integrase family. XerD subfamily.</text>
</comment>
<gene>
    <name evidence="1" type="primary">xerD</name>
    <name type="ordered locus">CT0602</name>
</gene>
<accession>Q8KET0</accession>
<reference key="1">
    <citation type="journal article" date="2002" name="Proc. Natl. Acad. Sci. U.S.A.">
        <title>The complete genome sequence of Chlorobium tepidum TLS, a photosynthetic, anaerobic, green-sulfur bacterium.</title>
        <authorList>
            <person name="Eisen J.A."/>
            <person name="Nelson K.E."/>
            <person name="Paulsen I.T."/>
            <person name="Heidelberg J.F."/>
            <person name="Wu M."/>
            <person name="Dodson R.J."/>
            <person name="DeBoy R.T."/>
            <person name="Gwinn M.L."/>
            <person name="Nelson W.C."/>
            <person name="Haft D.H."/>
            <person name="Hickey E.K."/>
            <person name="Peterson J.D."/>
            <person name="Durkin A.S."/>
            <person name="Kolonay J.F."/>
            <person name="Yang F."/>
            <person name="Holt I.E."/>
            <person name="Umayam L.A."/>
            <person name="Mason T.M."/>
            <person name="Brenner M."/>
            <person name="Shea T.P."/>
            <person name="Parksey D.S."/>
            <person name="Nierman W.C."/>
            <person name="Feldblyum T.V."/>
            <person name="Hansen C.L."/>
            <person name="Craven M.B."/>
            <person name="Radune D."/>
            <person name="Vamathevan J.J."/>
            <person name="Khouri H.M."/>
            <person name="White O."/>
            <person name="Gruber T.M."/>
            <person name="Ketchum K.A."/>
            <person name="Venter J.C."/>
            <person name="Tettelin H."/>
            <person name="Bryant D.A."/>
            <person name="Fraser C.M."/>
        </authorList>
    </citation>
    <scope>NUCLEOTIDE SEQUENCE [LARGE SCALE GENOMIC DNA]</scope>
    <source>
        <strain>ATCC 49652 / DSM 12025 / NBRC 103806 / TLS</strain>
    </source>
</reference>
<evidence type="ECO:0000255" key="1">
    <source>
        <dbReference type="HAMAP-Rule" id="MF_01807"/>
    </source>
</evidence>
<evidence type="ECO:0000255" key="2">
    <source>
        <dbReference type="PROSITE-ProRule" id="PRU01246"/>
    </source>
</evidence>
<evidence type="ECO:0000255" key="3">
    <source>
        <dbReference type="PROSITE-ProRule" id="PRU01248"/>
    </source>
</evidence>
<sequence length="304" mass="34609">MPEREEPWRKTLETFLNYLTLERNFSGNTRASYLNDLGRYLAWLHECGVKPEEAAPGDIRKFIQELHEIGLEASSIARNISAIRSFHKFLLTERLATMNPAENIHQPKLARYLPSVLTIEEMATLLDAPLKRHPTSTFMLRDKAMLEFLYATGVRVSELLGLSRLNLHMDDGFVRVFGKGSKERLVPVGQTAISWMKRYLDELRPGMMSATSHDTIFLNSRGGPLSRMAAWNIVREHAVIAGIEKPISPHTFRHSFATHLLEGGADLRVVQEMLGHSSIIATQIYTHIDRSFIKEVHKTFHPRG</sequence>
<name>XERD_CHLTE</name>
<proteinExistence type="inferred from homology"/>
<protein>
    <recommendedName>
        <fullName evidence="1">Tyrosine recombinase XerD</fullName>
    </recommendedName>
</protein>
<organism>
    <name type="scientific">Chlorobaculum tepidum (strain ATCC 49652 / DSM 12025 / NBRC 103806 / TLS)</name>
    <name type="common">Chlorobium tepidum</name>
    <dbReference type="NCBI Taxonomy" id="194439"/>
    <lineage>
        <taxon>Bacteria</taxon>
        <taxon>Pseudomonadati</taxon>
        <taxon>Chlorobiota</taxon>
        <taxon>Chlorobiia</taxon>
        <taxon>Chlorobiales</taxon>
        <taxon>Chlorobiaceae</taxon>
        <taxon>Chlorobaculum</taxon>
    </lineage>
</organism>
<dbReference type="EMBL" id="AE006470">
    <property type="protein sequence ID" value="AAM71844.1"/>
    <property type="molecule type" value="Genomic_DNA"/>
</dbReference>
<dbReference type="RefSeq" id="NP_661502.1">
    <property type="nucleotide sequence ID" value="NC_002932.3"/>
</dbReference>
<dbReference type="RefSeq" id="WP_010932289.1">
    <property type="nucleotide sequence ID" value="NC_002932.3"/>
</dbReference>
<dbReference type="SMR" id="Q8KET0"/>
<dbReference type="STRING" id="194439.CT0602"/>
<dbReference type="EnsemblBacteria" id="AAM71844">
    <property type="protein sequence ID" value="AAM71844"/>
    <property type="gene ID" value="CT0602"/>
</dbReference>
<dbReference type="KEGG" id="cte:CT0602"/>
<dbReference type="PATRIC" id="fig|194439.7.peg.560"/>
<dbReference type="eggNOG" id="COG4974">
    <property type="taxonomic scope" value="Bacteria"/>
</dbReference>
<dbReference type="HOGENOM" id="CLU_027562_9_6_10"/>
<dbReference type="OrthoDB" id="9801717at2"/>
<dbReference type="Proteomes" id="UP000001007">
    <property type="component" value="Chromosome"/>
</dbReference>
<dbReference type="GO" id="GO:0005737">
    <property type="term" value="C:cytoplasm"/>
    <property type="evidence" value="ECO:0007669"/>
    <property type="project" value="UniProtKB-SubCell"/>
</dbReference>
<dbReference type="GO" id="GO:0003677">
    <property type="term" value="F:DNA binding"/>
    <property type="evidence" value="ECO:0007669"/>
    <property type="project" value="UniProtKB-KW"/>
</dbReference>
<dbReference type="GO" id="GO:0009037">
    <property type="term" value="F:tyrosine-based site-specific recombinase activity"/>
    <property type="evidence" value="ECO:0007669"/>
    <property type="project" value="UniProtKB-UniRule"/>
</dbReference>
<dbReference type="GO" id="GO:0051301">
    <property type="term" value="P:cell division"/>
    <property type="evidence" value="ECO:0007669"/>
    <property type="project" value="UniProtKB-KW"/>
</dbReference>
<dbReference type="GO" id="GO:0007059">
    <property type="term" value="P:chromosome segregation"/>
    <property type="evidence" value="ECO:0007669"/>
    <property type="project" value="UniProtKB-UniRule"/>
</dbReference>
<dbReference type="GO" id="GO:0006313">
    <property type="term" value="P:DNA transposition"/>
    <property type="evidence" value="ECO:0007669"/>
    <property type="project" value="UniProtKB-UniRule"/>
</dbReference>
<dbReference type="CDD" id="cd00798">
    <property type="entry name" value="INT_XerDC_C"/>
    <property type="match status" value="1"/>
</dbReference>
<dbReference type="Gene3D" id="1.10.150.130">
    <property type="match status" value="1"/>
</dbReference>
<dbReference type="Gene3D" id="1.10.443.10">
    <property type="entry name" value="Intergrase catalytic core"/>
    <property type="match status" value="1"/>
</dbReference>
<dbReference type="HAMAP" id="MF_01808">
    <property type="entry name" value="Recomb_XerC_XerD"/>
    <property type="match status" value="1"/>
</dbReference>
<dbReference type="HAMAP" id="MF_01807">
    <property type="entry name" value="Recomb_XerD"/>
    <property type="match status" value="1"/>
</dbReference>
<dbReference type="InterPro" id="IPR044068">
    <property type="entry name" value="CB"/>
</dbReference>
<dbReference type="InterPro" id="IPR011010">
    <property type="entry name" value="DNA_brk_join_enz"/>
</dbReference>
<dbReference type="InterPro" id="IPR013762">
    <property type="entry name" value="Integrase-like_cat_sf"/>
</dbReference>
<dbReference type="InterPro" id="IPR002104">
    <property type="entry name" value="Integrase_catalytic"/>
</dbReference>
<dbReference type="InterPro" id="IPR010998">
    <property type="entry name" value="Integrase_recombinase_N"/>
</dbReference>
<dbReference type="InterPro" id="IPR004107">
    <property type="entry name" value="Integrase_SAM-like_N"/>
</dbReference>
<dbReference type="InterPro" id="IPR011932">
    <property type="entry name" value="Recomb_XerD"/>
</dbReference>
<dbReference type="InterPro" id="IPR023009">
    <property type="entry name" value="Tyrosine_recombinase_XerC/XerD"/>
</dbReference>
<dbReference type="InterPro" id="IPR050090">
    <property type="entry name" value="Tyrosine_recombinase_XerCD"/>
</dbReference>
<dbReference type="NCBIfam" id="NF001399">
    <property type="entry name" value="PRK00283.1"/>
    <property type="match status" value="1"/>
</dbReference>
<dbReference type="NCBIfam" id="TIGR02225">
    <property type="entry name" value="recomb_XerD"/>
    <property type="match status" value="1"/>
</dbReference>
<dbReference type="PANTHER" id="PTHR30349">
    <property type="entry name" value="PHAGE INTEGRASE-RELATED"/>
    <property type="match status" value="1"/>
</dbReference>
<dbReference type="PANTHER" id="PTHR30349:SF81">
    <property type="entry name" value="TYROSINE RECOMBINASE XERC"/>
    <property type="match status" value="1"/>
</dbReference>
<dbReference type="Pfam" id="PF02899">
    <property type="entry name" value="Phage_int_SAM_1"/>
    <property type="match status" value="1"/>
</dbReference>
<dbReference type="Pfam" id="PF00589">
    <property type="entry name" value="Phage_integrase"/>
    <property type="match status" value="1"/>
</dbReference>
<dbReference type="SUPFAM" id="SSF56349">
    <property type="entry name" value="DNA breaking-rejoining enzymes"/>
    <property type="match status" value="1"/>
</dbReference>
<dbReference type="PROSITE" id="PS51900">
    <property type="entry name" value="CB"/>
    <property type="match status" value="1"/>
</dbReference>
<dbReference type="PROSITE" id="PS51898">
    <property type="entry name" value="TYR_RECOMBINASE"/>
    <property type="match status" value="1"/>
</dbReference>
<feature type="chain" id="PRO_0000095381" description="Tyrosine recombinase XerD">
    <location>
        <begin position="1"/>
        <end position="304"/>
    </location>
</feature>
<feature type="domain" description="Core-binding (CB)" evidence="3">
    <location>
        <begin position="6"/>
        <end position="91"/>
    </location>
</feature>
<feature type="domain" description="Tyr recombinase" evidence="2">
    <location>
        <begin position="112"/>
        <end position="298"/>
    </location>
</feature>
<feature type="active site" evidence="1">
    <location>
        <position position="155"/>
    </location>
</feature>
<feature type="active site" evidence="1">
    <location>
        <position position="179"/>
    </location>
</feature>
<feature type="active site" evidence="1">
    <location>
        <position position="250"/>
    </location>
</feature>
<feature type="active site" evidence="1">
    <location>
        <position position="253"/>
    </location>
</feature>
<feature type="active site" evidence="1">
    <location>
        <position position="276"/>
    </location>
</feature>
<feature type="active site" description="O-(3'-phospho-DNA)-tyrosine intermediate" evidence="1">
    <location>
        <position position="285"/>
    </location>
</feature>
<keyword id="KW-0131">Cell cycle</keyword>
<keyword id="KW-0132">Cell division</keyword>
<keyword id="KW-0159">Chromosome partition</keyword>
<keyword id="KW-0963">Cytoplasm</keyword>
<keyword id="KW-0229">DNA integration</keyword>
<keyword id="KW-0233">DNA recombination</keyword>
<keyword id="KW-0238">DNA-binding</keyword>
<keyword id="KW-1185">Reference proteome</keyword>